<comment type="subcellular location">
    <subcellularLocation>
        <location evidence="2">Cell membrane</location>
        <topology evidence="2">Multi-pass membrane protein</topology>
    </subcellularLocation>
</comment>
<comment type="similarity">
    <text evidence="2">Belongs to the UPF0324 family.</text>
</comment>
<comment type="sequence caution" evidence="2">
    <conflict type="erroneous initiation">
        <sequence resource="EMBL-CDS" id="AAS95423"/>
    </conflict>
</comment>
<feature type="chain" id="PRO_0000157412" description="UPF0324 membrane protein DVU_0943">
    <location>
        <begin position="1"/>
        <end position="579"/>
    </location>
</feature>
<feature type="transmembrane region" description="Helical" evidence="1">
    <location>
        <begin position="26"/>
        <end position="45"/>
    </location>
</feature>
<feature type="transmembrane region" description="Helical" evidence="1">
    <location>
        <begin position="193"/>
        <end position="215"/>
    </location>
</feature>
<feature type="transmembrane region" description="Helical" evidence="1">
    <location>
        <begin position="225"/>
        <end position="243"/>
    </location>
</feature>
<feature type="transmembrane region" description="Helical" evidence="1">
    <location>
        <begin position="250"/>
        <end position="272"/>
    </location>
</feature>
<feature type="transmembrane region" description="Helical" evidence="1">
    <location>
        <begin position="305"/>
        <end position="327"/>
    </location>
</feature>
<feature type="transmembrane region" description="Helical" evidence="1">
    <location>
        <begin position="369"/>
        <end position="391"/>
    </location>
</feature>
<feature type="transmembrane region" description="Helical" evidence="1">
    <location>
        <begin position="430"/>
        <end position="452"/>
    </location>
</feature>
<feature type="transmembrane region" description="Helical" evidence="1">
    <location>
        <begin position="473"/>
        <end position="495"/>
    </location>
</feature>
<feature type="transmembrane region" description="Helical" evidence="1">
    <location>
        <begin position="515"/>
        <end position="533"/>
    </location>
</feature>
<feature type="transmembrane region" description="Helical" evidence="1">
    <location>
        <begin position="546"/>
        <end position="568"/>
    </location>
</feature>
<sequence>MAENESNVVVDHGQSRLSDLWTKEDYWAIWLGFVILIAGMWLFLANPSPEFAQKVDKANAVMAAEAERAPFKTLAYYKAQDDKGKLKAMDSATGKSIGAFLKAPGGWTSNPLESFVLSKEAAEERNAAAKSKFEAAKAKSDAAFAAAQVAEAAAAEAGFADTALNDAAQGKIAEWRADLAKMKSAEKKVKTKAFNISTSLPMLMVVMGLFFAIGMKFMGHDVPKFLVGFIGVFVVAVIAQMMGHQSTMKYWGIGTEAWAIIIGMLIANTVGTPNFIKPALQVEYYIKTGLVLLGAEVLFDKIIAIGIPGIFVAWVVTPIVLICTFIFGQKILKMPSKTLNMVISADMSVCGTSAAIATAAACRAKKEELTLSIGLSLVFTAIMMIVMPAFIKSVGMPQILGGAWMGGTIDATGAVAAAGAFLGEKALYVAATIKMIQNVLIGVVAFGVAVYWCARVECTSGRSVGWIEIWNRFPKFVLGFLTASIIFSIISGSLGSDMSQIMVNQGVLKGLSSPLRGWFFCLAFTAIGLATNFRELAHYFKGGKPLILYVCGQSFNLVLTLTMAYIMFYIVFPEITAKI</sequence>
<keyword id="KW-1003">Cell membrane</keyword>
<keyword id="KW-0472">Membrane</keyword>
<keyword id="KW-1185">Reference proteome</keyword>
<keyword id="KW-0812">Transmembrane</keyword>
<keyword id="KW-1133">Transmembrane helix</keyword>
<gene>
    <name type="ordered locus">DVU_0943</name>
</gene>
<name>Y943_NITV2</name>
<reference key="1">
    <citation type="journal article" date="2004" name="Nat. Biotechnol.">
        <title>The genome sequence of the anaerobic, sulfate-reducing bacterium Desulfovibrio vulgaris Hildenborough.</title>
        <authorList>
            <person name="Heidelberg J.F."/>
            <person name="Seshadri R."/>
            <person name="Haveman S.A."/>
            <person name="Hemme C.L."/>
            <person name="Paulsen I.T."/>
            <person name="Kolonay J.F."/>
            <person name="Eisen J.A."/>
            <person name="Ward N.L."/>
            <person name="Methe B.A."/>
            <person name="Brinkac L.M."/>
            <person name="Daugherty S.C."/>
            <person name="DeBoy R.T."/>
            <person name="Dodson R.J."/>
            <person name="Durkin A.S."/>
            <person name="Madupu R."/>
            <person name="Nelson W.C."/>
            <person name="Sullivan S.A."/>
            <person name="Fouts D.E."/>
            <person name="Haft D.H."/>
            <person name="Selengut J."/>
            <person name="Peterson J.D."/>
            <person name="Davidsen T.M."/>
            <person name="Zafar N."/>
            <person name="Zhou L."/>
            <person name="Radune D."/>
            <person name="Dimitrov G."/>
            <person name="Hance M."/>
            <person name="Tran K."/>
            <person name="Khouri H.M."/>
            <person name="Gill J."/>
            <person name="Utterback T.R."/>
            <person name="Feldblyum T.V."/>
            <person name="Wall J.D."/>
            <person name="Voordouw G."/>
            <person name="Fraser C.M."/>
        </authorList>
    </citation>
    <scope>NUCLEOTIDE SEQUENCE [LARGE SCALE GENOMIC DNA]</scope>
    <source>
        <strain>ATCC 29579 / DSM 644 / CCUG 34227 / NCIMB 8303 / VKM B-1760 / Hildenborough</strain>
    </source>
</reference>
<proteinExistence type="inferred from homology"/>
<organism>
    <name type="scientific">Nitratidesulfovibrio vulgaris (strain ATCC 29579 / DSM 644 / CCUG 34227 / NCIMB 8303 / VKM B-1760 / Hildenborough)</name>
    <name type="common">Desulfovibrio vulgaris</name>
    <dbReference type="NCBI Taxonomy" id="882"/>
    <lineage>
        <taxon>Bacteria</taxon>
        <taxon>Pseudomonadati</taxon>
        <taxon>Thermodesulfobacteriota</taxon>
        <taxon>Desulfovibrionia</taxon>
        <taxon>Desulfovibrionales</taxon>
        <taxon>Desulfovibrionaceae</taxon>
        <taxon>Nitratidesulfovibrio</taxon>
    </lineage>
</organism>
<dbReference type="EMBL" id="AE017285">
    <property type="protein sequence ID" value="AAS95423.1"/>
    <property type="status" value="ALT_INIT"/>
    <property type="molecule type" value="Genomic_DNA"/>
</dbReference>
<dbReference type="RefSeq" id="WP_014524295.1">
    <property type="nucleotide sequence ID" value="NC_002937.3"/>
</dbReference>
<dbReference type="RefSeq" id="YP_010164.1">
    <property type="nucleotide sequence ID" value="NC_002937.3"/>
</dbReference>
<dbReference type="SMR" id="Q72DI6"/>
<dbReference type="STRING" id="882.DVU_0943"/>
<dbReference type="PaxDb" id="882-DVU_0943"/>
<dbReference type="EnsemblBacteria" id="AAS95423">
    <property type="protein sequence ID" value="AAS95423"/>
    <property type="gene ID" value="DVU_0943"/>
</dbReference>
<dbReference type="KEGG" id="dvu:DVU_0943"/>
<dbReference type="PATRIC" id="fig|882.5.peg.887"/>
<dbReference type="eggNOG" id="COG2855">
    <property type="taxonomic scope" value="Bacteria"/>
</dbReference>
<dbReference type="HOGENOM" id="CLU_033541_6_0_7"/>
<dbReference type="OrthoDB" id="9766798at2"/>
<dbReference type="PhylomeDB" id="Q72DI6"/>
<dbReference type="Proteomes" id="UP000002194">
    <property type="component" value="Chromosome"/>
</dbReference>
<dbReference type="GO" id="GO:0005886">
    <property type="term" value="C:plasma membrane"/>
    <property type="evidence" value="ECO:0007669"/>
    <property type="project" value="UniProtKB-SubCell"/>
</dbReference>
<dbReference type="InterPro" id="IPR018383">
    <property type="entry name" value="UPF0324_pro"/>
</dbReference>
<dbReference type="PANTHER" id="PTHR30106">
    <property type="entry name" value="INNER MEMBRANE PROTEIN YEIH-RELATED"/>
    <property type="match status" value="1"/>
</dbReference>
<dbReference type="PANTHER" id="PTHR30106:SF1">
    <property type="entry name" value="UPF0324 MEMBRANE PROTEIN FN0533"/>
    <property type="match status" value="1"/>
</dbReference>
<dbReference type="Pfam" id="PF03601">
    <property type="entry name" value="Cons_hypoth698"/>
    <property type="match status" value="1"/>
</dbReference>
<protein>
    <recommendedName>
        <fullName>UPF0324 membrane protein DVU_0943</fullName>
    </recommendedName>
</protein>
<evidence type="ECO:0000255" key="1"/>
<evidence type="ECO:0000305" key="2"/>
<accession>Q72DI6</accession>